<proteinExistence type="evidence at protein level"/>
<accession>P18548</accession>
<sequence>MDTTVPTFSLAELQQGLHQDEFRRCLRDKGLFYLTDCGLTDTELKSAKDLVIDFFEHGSEAEKRAVTSPVPTMRRGFTGLESESTAQITNTGSYSDYSMCYSMGTADNLFPSGDFERIWTQYFDRQYTASRAVAREVLRATGTEPDGGVEAFLDCEPLLRFRYFPQVPEHRSAEEQPLRMAPHYDLSMVTLIQQTPCANGFVSLQAEVGGAFTDLPYRPDAVLVFCGAIATLVTGGQVKAPRHHVAAPRRDQIAGSSRTSSVFFLRPNADFTFSVPLARECGFDVSLDGETATFQDWIGGNYVNIRRTSKA</sequence>
<reference key="1">
    <citation type="journal article" date="1989" name="J. Bacteriol.">
        <title>Cloning, characterization, and expression in Escherichia coli of the Streptomyces clavuligerus gene encoding deacetoxycephalosporin C synthetase.</title>
        <authorList>
            <person name="Kovacevic S."/>
            <person name="Weigel B.J."/>
            <person name="Tobin M.B."/>
            <person name="Ingolia T.D."/>
            <person name="Miller J.R."/>
        </authorList>
    </citation>
    <scope>NUCLEOTIDE SEQUENCE [GENOMIC DNA]</scope>
    <source>
        <strain>ATCC 27064 / DSM 738 / JCM 4710 / NBRC 13307 / NCIMB 12785 / NRRL 3585 / VKM Ac-602</strain>
    </source>
</reference>
<reference key="2">
    <citation type="journal article" date="1990" name="J. Bacteriol.">
        <title>The beta-lactam biosynthesis genes for isopenicillin N epimerase and deacetoxycephalosporin C synthetase are expressed from a single transcript in Streptomyces clavuligerus.</title>
        <authorList>
            <person name="Kovacevic S."/>
            <person name="Tobin M.B."/>
            <person name="Miller J.R."/>
        </authorList>
    </citation>
    <scope>NUCLEOTIDE SEQUENCE [GENOMIC DNA]</scope>
    <source>
        <strain>ATCC 27064 / DSM 738 / JCM 4710 / NBRC 13307 / NCIMB 12785 / NRRL 3585 / VKM Ac-602</strain>
    </source>
</reference>
<gene>
    <name type="primary">cefE</name>
</gene>
<evidence type="ECO:0000255" key="1">
    <source>
        <dbReference type="PROSITE-ProRule" id="PRU00805"/>
    </source>
</evidence>
<evidence type="ECO:0000305" key="2"/>
<evidence type="ECO:0007829" key="3">
    <source>
        <dbReference type="PDB" id="1DCS"/>
    </source>
</evidence>
<evidence type="ECO:0007829" key="4">
    <source>
        <dbReference type="PDB" id="1E5H"/>
    </source>
</evidence>
<evidence type="ECO:0007829" key="5">
    <source>
        <dbReference type="PDB" id="1RXF"/>
    </source>
</evidence>
<evidence type="ECO:0007829" key="6">
    <source>
        <dbReference type="PDB" id="1RXG"/>
    </source>
</evidence>
<evidence type="ECO:0007829" key="7">
    <source>
        <dbReference type="PDB" id="1UO9"/>
    </source>
</evidence>
<evidence type="ECO:0007829" key="8">
    <source>
        <dbReference type="PDB" id="1W2A"/>
    </source>
</evidence>
<dbReference type="EC" id="1.14.20.1"/>
<dbReference type="EMBL" id="M32324">
    <property type="protein sequence ID" value="AAA26715.1"/>
    <property type="molecule type" value="Genomic_DNA"/>
</dbReference>
<dbReference type="PIR" id="A32043">
    <property type="entry name" value="A32043"/>
</dbReference>
<dbReference type="PIR" id="T52312">
    <property type="entry name" value="T52312"/>
</dbReference>
<dbReference type="PDB" id="1DCS">
    <property type="method" value="X-ray"/>
    <property type="resolution" value="1.30 A"/>
    <property type="chains" value="A=1-311"/>
</dbReference>
<dbReference type="PDB" id="1E5H">
    <property type="method" value="X-ray"/>
    <property type="resolution" value="1.96 A"/>
    <property type="chains" value="A=1-308"/>
</dbReference>
<dbReference type="PDB" id="1E5I">
    <property type="method" value="X-ray"/>
    <property type="resolution" value="2.10 A"/>
    <property type="chains" value="A=1-306"/>
</dbReference>
<dbReference type="PDB" id="1HJF">
    <property type="method" value="X-ray"/>
    <property type="resolution" value="1.60 A"/>
    <property type="chains" value="A=1-311"/>
</dbReference>
<dbReference type="PDB" id="1HJG">
    <property type="method" value="X-ray"/>
    <property type="resolution" value="1.50 A"/>
    <property type="chains" value="A=1-311"/>
</dbReference>
<dbReference type="PDB" id="1RXF">
    <property type="method" value="X-ray"/>
    <property type="resolution" value="1.50 A"/>
    <property type="chains" value="A=1-311"/>
</dbReference>
<dbReference type="PDB" id="1RXG">
    <property type="method" value="X-ray"/>
    <property type="resolution" value="1.50 A"/>
    <property type="chains" value="A=1-311"/>
</dbReference>
<dbReference type="PDB" id="1UNB">
    <property type="method" value="X-ray"/>
    <property type="resolution" value="1.50 A"/>
    <property type="chains" value="A=1-311"/>
</dbReference>
<dbReference type="PDB" id="1UO9">
    <property type="method" value="X-ray"/>
    <property type="resolution" value="1.50 A"/>
    <property type="chains" value="A=1-311"/>
</dbReference>
<dbReference type="PDB" id="1UOB">
    <property type="method" value="X-ray"/>
    <property type="resolution" value="1.70 A"/>
    <property type="chains" value="A=1-311"/>
</dbReference>
<dbReference type="PDB" id="1UOF">
    <property type="method" value="X-ray"/>
    <property type="resolution" value="1.60 A"/>
    <property type="chains" value="A=1-311"/>
</dbReference>
<dbReference type="PDB" id="1UOG">
    <property type="method" value="X-ray"/>
    <property type="resolution" value="1.70 A"/>
    <property type="chains" value="A=1-311"/>
</dbReference>
<dbReference type="PDB" id="1W28">
    <property type="method" value="X-ray"/>
    <property type="resolution" value="2.30 A"/>
    <property type="chains" value="A=1-311"/>
</dbReference>
<dbReference type="PDB" id="1W2A">
    <property type="method" value="X-ray"/>
    <property type="resolution" value="2.51 A"/>
    <property type="chains" value="X=1-311"/>
</dbReference>
<dbReference type="PDB" id="1W2N">
    <property type="method" value="X-ray"/>
    <property type="resolution" value="2.70 A"/>
    <property type="chains" value="A=1-311"/>
</dbReference>
<dbReference type="PDB" id="1W2O">
    <property type="method" value="X-ray"/>
    <property type="resolution" value="3.00 A"/>
    <property type="chains" value="A=1-311"/>
</dbReference>
<dbReference type="PDB" id="2JB8">
    <property type="method" value="X-ray"/>
    <property type="resolution" value="1.53 A"/>
    <property type="chains" value="A=1-311"/>
</dbReference>
<dbReference type="PDBsum" id="1DCS"/>
<dbReference type="PDBsum" id="1E5H"/>
<dbReference type="PDBsum" id="1E5I"/>
<dbReference type="PDBsum" id="1HJF"/>
<dbReference type="PDBsum" id="1HJG"/>
<dbReference type="PDBsum" id="1RXF"/>
<dbReference type="PDBsum" id="1RXG"/>
<dbReference type="PDBsum" id="1UNB"/>
<dbReference type="PDBsum" id="1UO9"/>
<dbReference type="PDBsum" id="1UOB"/>
<dbReference type="PDBsum" id="1UOF"/>
<dbReference type="PDBsum" id="1UOG"/>
<dbReference type="PDBsum" id="1W28"/>
<dbReference type="PDBsum" id="1W2A"/>
<dbReference type="PDBsum" id="1W2N"/>
<dbReference type="PDBsum" id="1W2O"/>
<dbReference type="PDBsum" id="2JB8"/>
<dbReference type="SMR" id="P18548"/>
<dbReference type="STRING" id="1901.BB341_07740"/>
<dbReference type="DrugBank" id="DB03229">
    <property type="generic name" value="alpha-Ketoisocaproic acid"/>
</dbReference>
<dbReference type="DrugBank" id="DB04074">
    <property type="generic name" value="alpha-Ketoisovalerate"/>
</dbReference>
<dbReference type="DrugBank" id="DB03938">
    <property type="generic name" value="Deacetoxycephalosporin C"/>
</dbReference>
<dbReference type="eggNOG" id="COG3491">
    <property type="taxonomic scope" value="Bacteria"/>
</dbReference>
<dbReference type="BioCyc" id="MetaCyc:MONOMER-13407"/>
<dbReference type="BRENDA" id="1.14.20.1">
    <property type="organism ID" value="5988"/>
</dbReference>
<dbReference type="SABIO-RK" id="P18548"/>
<dbReference type="UniPathway" id="UPA00172"/>
<dbReference type="EvolutionaryTrace" id="P18548"/>
<dbReference type="GO" id="GO:0050599">
    <property type="term" value="F:deacetoxycephalosporin-C synthase activity"/>
    <property type="evidence" value="ECO:0007669"/>
    <property type="project" value="UniProtKB-EC"/>
</dbReference>
<dbReference type="GO" id="GO:0005506">
    <property type="term" value="F:iron ion binding"/>
    <property type="evidence" value="ECO:0007669"/>
    <property type="project" value="InterPro"/>
</dbReference>
<dbReference type="GO" id="GO:0031418">
    <property type="term" value="F:L-ascorbic acid binding"/>
    <property type="evidence" value="ECO:0007669"/>
    <property type="project" value="UniProtKB-KW"/>
</dbReference>
<dbReference type="GO" id="GO:0017000">
    <property type="term" value="P:antibiotic biosynthetic process"/>
    <property type="evidence" value="ECO:0007669"/>
    <property type="project" value="UniProtKB-KW"/>
</dbReference>
<dbReference type="Gene3D" id="2.60.120.330">
    <property type="entry name" value="B-lactam Antibiotic, Isopenicillin N Synthase, Chain"/>
    <property type="match status" value="1"/>
</dbReference>
<dbReference type="InterPro" id="IPR044861">
    <property type="entry name" value="IPNS-like_FE2OG_OXY"/>
</dbReference>
<dbReference type="InterPro" id="IPR027443">
    <property type="entry name" value="IPNS-like_sf"/>
</dbReference>
<dbReference type="InterPro" id="IPR050231">
    <property type="entry name" value="Iron_ascorbate_oxido_reductase"/>
</dbReference>
<dbReference type="InterPro" id="IPR002057">
    <property type="entry name" value="Isopenicillin-N_synth_CS"/>
</dbReference>
<dbReference type="InterPro" id="IPR005123">
    <property type="entry name" value="Oxoglu/Fe-dep_dioxygenase_dom"/>
</dbReference>
<dbReference type="PANTHER" id="PTHR47990">
    <property type="entry name" value="2-OXOGLUTARATE (2OG) AND FE(II)-DEPENDENT OXYGENASE SUPERFAMILY PROTEIN-RELATED"/>
    <property type="match status" value="1"/>
</dbReference>
<dbReference type="Pfam" id="PF03171">
    <property type="entry name" value="2OG-FeII_Oxy"/>
    <property type="match status" value="1"/>
</dbReference>
<dbReference type="SUPFAM" id="SSF51197">
    <property type="entry name" value="Clavaminate synthase-like"/>
    <property type="match status" value="1"/>
</dbReference>
<dbReference type="PROSITE" id="PS51471">
    <property type="entry name" value="FE2OG_OXY"/>
    <property type="match status" value="1"/>
</dbReference>
<dbReference type="PROSITE" id="PS00186">
    <property type="entry name" value="IPNS_2"/>
    <property type="match status" value="1"/>
</dbReference>
<feature type="chain" id="PRO_0000219511" description="Deacetoxycephalosporin C synthase">
    <location>
        <begin position="1"/>
        <end position="311"/>
    </location>
</feature>
<feature type="domain" description="Fe2OG dioxygenase" evidence="1">
    <location>
        <begin position="154"/>
        <end position="267"/>
    </location>
</feature>
<feature type="strand" evidence="3">
    <location>
        <begin position="7"/>
        <end position="9"/>
    </location>
</feature>
<feature type="helix" evidence="3">
    <location>
        <begin position="10"/>
        <end position="14"/>
    </location>
</feature>
<feature type="turn" evidence="5">
    <location>
        <begin position="15"/>
        <end position="18"/>
    </location>
</feature>
<feature type="helix" evidence="3">
    <location>
        <begin position="19"/>
        <end position="28"/>
    </location>
</feature>
<feature type="strand" evidence="3">
    <location>
        <begin position="31"/>
        <end position="38"/>
    </location>
</feature>
<feature type="helix" evidence="3">
    <location>
        <begin position="41"/>
        <end position="57"/>
    </location>
</feature>
<feature type="helix" evidence="3">
    <location>
        <begin position="60"/>
        <end position="65"/>
    </location>
</feature>
<feature type="strand" evidence="3">
    <location>
        <begin position="73"/>
        <end position="79"/>
    </location>
</feature>
<feature type="helix" evidence="6">
    <location>
        <begin position="94"/>
        <end position="96"/>
    </location>
</feature>
<feature type="strand" evidence="3">
    <location>
        <begin position="99"/>
        <end position="103"/>
    </location>
</feature>
<feature type="strand" evidence="3">
    <location>
        <begin position="105"/>
        <end position="107"/>
    </location>
</feature>
<feature type="helix" evidence="3">
    <location>
        <begin position="113"/>
        <end position="140"/>
    </location>
</feature>
<feature type="helix" evidence="3">
    <location>
        <begin position="149"/>
        <end position="153"/>
    </location>
</feature>
<feature type="strand" evidence="3">
    <location>
        <begin position="158"/>
        <end position="164"/>
    </location>
</feature>
<feature type="strand" evidence="3">
    <location>
        <begin position="180"/>
        <end position="185"/>
    </location>
</feature>
<feature type="strand" evidence="3">
    <location>
        <begin position="187"/>
        <end position="195"/>
    </location>
</feature>
<feature type="strand" evidence="3">
    <location>
        <begin position="204"/>
        <end position="208"/>
    </location>
</feature>
<feature type="strand" evidence="3">
    <location>
        <begin position="211"/>
        <end position="214"/>
    </location>
</feature>
<feature type="strand" evidence="3">
    <location>
        <begin position="222"/>
        <end position="226"/>
    </location>
</feature>
<feature type="helix" evidence="3">
    <location>
        <begin position="228"/>
        <end position="233"/>
    </location>
</feature>
<feature type="turn" evidence="8">
    <location>
        <begin position="234"/>
        <end position="236"/>
    </location>
</feature>
<feature type="strand" evidence="3">
    <location>
        <begin position="243"/>
        <end position="245"/>
    </location>
</feature>
<feature type="helix" evidence="7">
    <location>
        <begin position="250"/>
        <end position="252"/>
    </location>
</feature>
<feature type="strand" evidence="3">
    <location>
        <begin position="258"/>
        <end position="265"/>
    </location>
</feature>
<feature type="strand" evidence="3">
    <location>
        <begin position="272"/>
        <end position="274"/>
    </location>
</feature>
<feature type="helix" evidence="3">
    <location>
        <begin position="275"/>
        <end position="280"/>
    </location>
</feature>
<feature type="strand" evidence="3">
    <location>
        <begin position="289"/>
        <end position="293"/>
    </location>
</feature>
<feature type="helix" evidence="3">
    <location>
        <begin position="294"/>
        <end position="298"/>
    </location>
</feature>
<feature type="strand" evidence="4">
    <location>
        <begin position="305"/>
        <end position="307"/>
    </location>
</feature>
<comment type="function">
    <text>Catalyzes the step from penicillin N to deacetoxy-cephalosporin C.</text>
</comment>
<comment type="catalytic activity">
    <reaction>
        <text>penicillin N + 2-oxoglutarate + O2 = deacetoxycephalosporin C + succinate + CO2 + H2O</text>
        <dbReference type="Rhea" id="RHEA:20748"/>
        <dbReference type="ChEBI" id="CHEBI:15377"/>
        <dbReference type="ChEBI" id="CHEBI:15379"/>
        <dbReference type="ChEBI" id="CHEBI:16526"/>
        <dbReference type="ChEBI" id="CHEBI:16810"/>
        <dbReference type="ChEBI" id="CHEBI:30031"/>
        <dbReference type="ChEBI" id="CHEBI:58408"/>
        <dbReference type="ChEBI" id="CHEBI:58415"/>
        <dbReference type="EC" id="1.14.20.1"/>
    </reaction>
</comment>
<comment type="cofactor">
    <cofactor>
        <name>Fe cation</name>
        <dbReference type="ChEBI" id="CHEBI:24875"/>
    </cofactor>
</comment>
<comment type="cofactor">
    <cofactor>
        <name>L-ascorbate</name>
        <dbReference type="ChEBI" id="CHEBI:38290"/>
    </cofactor>
</comment>
<comment type="pathway">
    <text>Antibiotic biosynthesis; cephalosporin C biosynthesis.</text>
</comment>
<comment type="similarity">
    <text evidence="2">Belongs to the iron/ascorbate-dependent oxidoreductase family.</text>
</comment>
<keyword id="KW-0002">3D-structure</keyword>
<keyword id="KW-0045">Antibiotic biosynthesis</keyword>
<keyword id="KW-0408">Iron</keyword>
<keyword id="KW-0560">Oxidoreductase</keyword>
<keyword id="KW-0847">Vitamin C</keyword>
<organism>
    <name type="scientific">Streptomyces clavuligerus</name>
    <dbReference type="NCBI Taxonomy" id="1901"/>
    <lineage>
        <taxon>Bacteria</taxon>
        <taxon>Bacillati</taxon>
        <taxon>Actinomycetota</taxon>
        <taxon>Actinomycetes</taxon>
        <taxon>Kitasatosporales</taxon>
        <taxon>Streptomycetaceae</taxon>
        <taxon>Streptomyces</taxon>
    </lineage>
</organism>
<protein>
    <recommendedName>
        <fullName>Deacetoxycephalosporin C synthase</fullName>
        <shortName>DAOCS</shortName>
        <ecNumber>1.14.20.1</ecNumber>
    </recommendedName>
    <alternativeName>
        <fullName>Expandase</fullName>
    </alternativeName>
</protein>
<name>CEFE_STRCL</name>